<dbReference type="EMBL" id="U14003">
    <property type="protein sequence ID" value="AAA97015.1"/>
    <property type="status" value="ALT_FRAME"/>
    <property type="molecule type" value="Genomic_DNA"/>
</dbReference>
<dbReference type="EMBL" id="U14003">
    <property type="protein sequence ID" value="AAA97014.1"/>
    <property type="status" value="ALT_FRAME"/>
    <property type="molecule type" value="Genomic_DNA"/>
</dbReference>
<dbReference type="EMBL" id="U00096">
    <property type="protein sequence ID" value="AAC77076.1"/>
    <property type="molecule type" value="Genomic_DNA"/>
</dbReference>
<dbReference type="EMBL" id="AP009048">
    <property type="protein sequence ID" value="BAE78117.1"/>
    <property type="molecule type" value="Genomic_DNA"/>
</dbReference>
<dbReference type="PIR" id="B65221">
    <property type="entry name" value="B65221"/>
</dbReference>
<dbReference type="PIR" id="S56343">
    <property type="entry name" value="S56343"/>
</dbReference>
<dbReference type="RefSeq" id="NP_418539.1">
    <property type="nucleotide sequence ID" value="NC_000913.3"/>
</dbReference>
<dbReference type="RefSeq" id="WP_000093154.1">
    <property type="nucleotide sequence ID" value="NZ_STEB01000014.1"/>
</dbReference>
<dbReference type="PDB" id="3OB6">
    <property type="method" value="X-ray"/>
    <property type="resolution" value="3.00 A"/>
    <property type="chains" value="A/B=1-445"/>
</dbReference>
<dbReference type="PDB" id="5J4I">
    <property type="method" value="X-ray"/>
    <property type="resolution" value="2.21 A"/>
    <property type="chains" value="A/B=1-445"/>
</dbReference>
<dbReference type="PDB" id="5J4N">
    <property type="method" value="X-ray"/>
    <property type="resolution" value="2.59 A"/>
    <property type="chains" value="A/B=1-445"/>
</dbReference>
<dbReference type="PDB" id="7O82">
    <property type="method" value="X-ray"/>
    <property type="resolution" value="1.69 A"/>
    <property type="chains" value="A/B=1-445"/>
</dbReference>
<dbReference type="PDBsum" id="3OB6"/>
<dbReference type="PDBsum" id="5J4I"/>
<dbReference type="PDBsum" id="5J4N"/>
<dbReference type="PDBsum" id="7O82"/>
<dbReference type="SMR" id="P60061"/>
<dbReference type="BioGRID" id="4263081">
    <property type="interactions" value="7"/>
</dbReference>
<dbReference type="DIP" id="DIP-59619N"/>
<dbReference type="FunCoup" id="P60061">
    <property type="interactions" value="158"/>
</dbReference>
<dbReference type="STRING" id="511145.b4115"/>
<dbReference type="TCDB" id="2.A.3.2.5">
    <property type="family name" value="the amino acid-polyamine-organocation (apc) family"/>
</dbReference>
<dbReference type="PaxDb" id="511145-b4115"/>
<dbReference type="ABCD" id="P60061">
    <property type="antibodies" value="1 sequenced antibody"/>
</dbReference>
<dbReference type="EnsemblBacteria" id="AAC77076">
    <property type="protein sequence ID" value="AAC77076"/>
    <property type="gene ID" value="b4115"/>
</dbReference>
<dbReference type="GeneID" id="93777720"/>
<dbReference type="GeneID" id="948628"/>
<dbReference type="KEGG" id="ecj:JW4076"/>
<dbReference type="KEGG" id="eco:b4115"/>
<dbReference type="KEGG" id="ecoc:C3026_22235"/>
<dbReference type="PATRIC" id="fig|1411691.4.peg.2585"/>
<dbReference type="EchoBASE" id="EB2355"/>
<dbReference type="eggNOG" id="COG0531">
    <property type="taxonomic scope" value="Bacteria"/>
</dbReference>
<dbReference type="HOGENOM" id="CLU_007946_1_0_6"/>
<dbReference type="InParanoid" id="P60061"/>
<dbReference type="OMA" id="WVSNAAL"/>
<dbReference type="OrthoDB" id="3185104at2"/>
<dbReference type="PhylomeDB" id="P60061"/>
<dbReference type="BioCyc" id="EcoCyc:YJDE-MONOMER"/>
<dbReference type="BioCyc" id="MetaCyc:YJDE-MONOMER"/>
<dbReference type="EvolutionaryTrace" id="P60061"/>
<dbReference type="PRO" id="PR:P60061"/>
<dbReference type="Proteomes" id="UP000000625">
    <property type="component" value="Chromosome"/>
</dbReference>
<dbReference type="GO" id="GO:0005886">
    <property type="term" value="C:plasma membrane"/>
    <property type="evidence" value="ECO:0000314"/>
    <property type="project" value="EcoCyc"/>
</dbReference>
<dbReference type="GO" id="GO:0043862">
    <property type="term" value="F:arginine:agmatine antiporter activity"/>
    <property type="evidence" value="ECO:0000314"/>
    <property type="project" value="GO_Central"/>
</dbReference>
<dbReference type="GO" id="GO:1990451">
    <property type="term" value="P:cellular stress response to acidic pH"/>
    <property type="evidence" value="ECO:0000315"/>
    <property type="project" value="EcoCyc"/>
</dbReference>
<dbReference type="FunFam" id="1.20.1740.10:FF:000011">
    <property type="entry name" value="Arginine/agmatine antiporter"/>
    <property type="match status" value="1"/>
</dbReference>
<dbReference type="Gene3D" id="1.20.1740.10">
    <property type="entry name" value="Amino acid/polyamine transporter I"/>
    <property type="match status" value="1"/>
</dbReference>
<dbReference type="InterPro" id="IPR002293">
    <property type="entry name" value="AA/rel_permease1"/>
</dbReference>
<dbReference type="InterPro" id="IPR050367">
    <property type="entry name" value="APC_superfamily"/>
</dbReference>
<dbReference type="NCBIfam" id="NF007929">
    <property type="entry name" value="PRK10644.1"/>
    <property type="match status" value="1"/>
</dbReference>
<dbReference type="PANTHER" id="PTHR42770">
    <property type="entry name" value="AMINO ACID TRANSPORTER-RELATED"/>
    <property type="match status" value="1"/>
</dbReference>
<dbReference type="PANTHER" id="PTHR42770:SF18">
    <property type="entry name" value="ARGININE_AGMATINE ANTIPORTER"/>
    <property type="match status" value="1"/>
</dbReference>
<dbReference type="Pfam" id="PF13520">
    <property type="entry name" value="AA_permease_2"/>
    <property type="match status" value="1"/>
</dbReference>
<dbReference type="PIRSF" id="PIRSF006060">
    <property type="entry name" value="AA_transporter"/>
    <property type="match status" value="1"/>
</dbReference>
<organism>
    <name type="scientific">Escherichia coli (strain K12)</name>
    <dbReference type="NCBI Taxonomy" id="83333"/>
    <lineage>
        <taxon>Bacteria</taxon>
        <taxon>Pseudomonadati</taxon>
        <taxon>Pseudomonadota</taxon>
        <taxon>Gammaproteobacteria</taxon>
        <taxon>Enterobacterales</taxon>
        <taxon>Enterobacteriaceae</taxon>
        <taxon>Escherichia</taxon>
    </lineage>
</organism>
<keyword id="KW-0002">3D-structure</keyword>
<keyword id="KW-0029">Amino-acid transport</keyword>
<keyword id="KW-0050">Antiport</keyword>
<keyword id="KW-0997">Cell inner membrane</keyword>
<keyword id="KW-1003">Cell membrane</keyword>
<keyword id="KW-0472">Membrane</keyword>
<keyword id="KW-1185">Reference proteome</keyword>
<keyword id="KW-0812">Transmembrane</keyword>
<keyword id="KW-1133">Transmembrane helix</keyword>
<keyword id="KW-0813">Transport</keyword>
<accession>P60061</accession>
<accession>P39268</accession>
<accession>P39269</accession>
<accession>Q2M6I9</accession>
<feature type="chain" id="PRO_0000054230" description="Arginine/agmatine antiporter">
    <location>
        <begin position="1"/>
        <end position="445"/>
    </location>
</feature>
<feature type="topological domain" description="Cytoplasmic" evidence="2">
    <location>
        <begin position="1"/>
        <end position="11"/>
    </location>
</feature>
<feature type="transmembrane region" description="Helical" evidence="17">
    <location>
        <begin position="12"/>
        <end position="24"/>
    </location>
</feature>
<feature type="topological domain" description="Periplasmic" evidence="2">
    <location>
        <begin position="25"/>
        <end position="40"/>
    </location>
</feature>
<feature type="transmembrane region" description="Helical" evidence="17">
    <location>
        <begin position="41"/>
        <end position="62"/>
    </location>
</feature>
<feature type="topological domain" description="Cytoplasmic" evidence="2">
    <location>
        <begin position="63"/>
        <end position="83"/>
    </location>
</feature>
<feature type="transmembrane region" description="Helical" evidence="17">
    <location>
        <begin position="84"/>
        <end position="113"/>
    </location>
</feature>
<feature type="topological domain" description="Periplasmic" evidence="2">
    <location>
        <begin position="114"/>
        <end position="123"/>
    </location>
</feature>
<feature type="transmembrane region" description="Helical" evidence="17">
    <location>
        <begin position="124"/>
        <end position="142"/>
    </location>
</feature>
<feature type="topological domain" description="Cytoplasmic" evidence="2">
    <location>
        <begin position="143"/>
        <end position="145"/>
    </location>
</feature>
<feature type="transmembrane region" description="Helical" evidence="17">
    <location>
        <begin position="146"/>
        <end position="171"/>
    </location>
</feature>
<feature type="topological domain" description="Periplasmic" evidence="2">
    <location>
        <begin position="172"/>
        <end position="188"/>
    </location>
</feature>
<feature type="transmembrane region" description="Helical" evidence="17">
    <location>
        <begin position="189"/>
        <end position="204"/>
    </location>
</feature>
<feature type="topological domain" description="Cytoplasmic" evidence="2">
    <location>
        <begin position="205"/>
        <end position="222"/>
    </location>
</feature>
<feature type="transmembrane region" description="Helical" evidence="17">
    <location>
        <begin position="223"/>
        <end position="247"/>
    </location>
</feature>
<feature type="topological domain" description="Periplasmic" evidence="2">
    <location>
        <begin position="248"/>
        <end position="272"/>
    </location>
</feature>
<feature type="transmembrane region" description="Helical" evidence="17">
    <location>
        <begin position="273"/>
        <end position="301"/>
    </location>
</feature>
<feature type="topological domain" description="Cytoplasmic" evidence="2">
    <location>
        <begin position="302"/>
        <end position="324"/>
    </location>
</feature>
<feature type="transmembrane region" description="Helical" evidence="17">
    <location>
        <begin position="325"/>
        <end position="343"/>
    </location>
</feature>
<feature type="topological domain" description="Periplasmic" evidence="2">
    <location>
        <begin position="344"/>
        <end position="346"/>
    </location>
</feature>
<feature type="transmembrane region" description="Helical" evidence="17">
    <location>
        <begin position="347"/>
        <end position="370"/>
    </location>
</feature>
<feature type="topological domain" description="Cytoplasmic" evidence="2">
    <location>
        <begin position="371"/>
        <end position="384"/>
    </location>
</feature>
<feature type="transmembrane region" description="Helical" evidence="17">
    <location>
        <begin position="385"/>
        <end position="404"/>
    </location>
</feature>
<feature type="topological domain" description="Periplasmic" evidence="2">
    <location>
        <begin position="405"/>
        <end position="408"/>
    </location>
</feature>
<feature type="transmembrane region" description="Helical" evidence="17">
    <location>
        <begin position="409"/>
        <end position="427"/>
    </location>
</feature>
<feature type="topological domain" description="Cytoplasmic" evidence="2 5">
    <location>
        <begin position="428"/>
        <end position="445"/>
    </location>
</feature>
<feature type="binding site" evidence="8 18">
    <location>
        <position position="23"/>
    </location>
    <ligand>
        <name>agmatine</name>
        <dbReference type="ChEBI" id="CHEBI:58145"/>
    </ligand>
</feature>
<feature type="binding site" evidence="7 16">
    <location>
        <position position="23"/>
    </location>
    <ligand>
        <name>L-arginine</name>
        <dbReference type="ChEBI" id="CHEBI:32682"/>
    </ligand>
</feature>
<feature type="binding site" evidence="7 16">
    <location>
        <position position="26"/>
    </location>
    <ligand>
        <name>L-arginine</name>
        <dbReference type="ChEBI" id="CHEBI:32682"/>
    </ligand>
</feature>
<feature type="binding site" evidence="8 18">
    <location>
        <position position="96"/>
    </location>
    <ligand>
        <name>agmatine</name>
        <dbReference type="ChEBI" id="CHEBI:58145"/>
    </ligand>
</feature>
<feature type="binding site" evidence="7 16">
    <location>
        <position position="96"/>
    </location>
    <ligand>
        <name>L-arginine</name>
        <dbReference type="ChEBI" id="CHEBI:32682"/>
    </ligand>
</feature>
<feature type="binding site" evidence="8 18">
    <location>
        <position position="97"/>
    </location>
    <ligand>
        <name>agmatine</name>
        <dbReference type="ChEBI" id="CHEBI:58145"/>
    </ligand>
</feature>
<feature type="binding site" evidence="8 18">
    <location>
        <position position="101"/>
    </location>
    <ligand>
        <name>agmatine</name>
        <dbReference type="ChEBI" id="CHEBI:58145"/>
    </ligand>
</feature>
<feature type="binding site" evidence="8">
    <location>
        <position position="104"/>
    </location>
    <ligand>
        <name>agmatine</name>
        <dbReference type="ChEBI" id="CHEBI:58145"/>
    </ligand>
</feature>
<feature type="binding site" evidence="7">
    <location>
        <position position="202"/>
    </location>
    <ligand>
        <name>L-arginine</name>
        <dbReference type="ChEBI" id="CHEBI:32682"/>
    </ligand>
</feature>
<feature type="binding site" evidence="8">
    <location>
        <position position="203"/>
    </location>
    <ligand>
        <name>agmatine</name>
        <dbReference type="ChEBI" id="CHEBI:58145"/>
    </ligand>
</feature>
<feature type="binding site" evidence="8 18">
    <location>
        <position position="205"/>
    </location>
    <ligand>
        <name>agmatine</name>
        <dbReference type="ChEBI" id="CHEBI:58145"/>
    </ligand>
</feature>
<feature type="binding site" evidence="7">
    <location>
        <position position="205"/>
    </location>
    <ligand>
        <name>L-arginine</name>
        <dbReference type="ChEBI" id="CHEBI:32682"/>
    </ligand>
</feature>
<feature type="binding site" evidence="8">
    <location>
        <position position="293"/>
    </location>
    <ligand>
        <name>agmatine</name>
        <dbReference type="ChEBI" id="CHEBI:58145"/>
    </ligand>
</feature>
<feature type="binding site" evidence="7">
    <location>
        <position position="357"/>
    </location>
    <ligand>
        <name>L-arginine</name>
        <dbReference type="ChEBI" id="CHEBI:32682"/>
    </ligand>
</feature>
<feature type="site" description="Cytoplasmic (distal) gate" evidence="15">
    <location>
        <position position="93"/>
    </location>
</feature>
<feature type="site" description="Periplasmic (proximal) gate" evidence="1">
    <location>
        <position position="202"/>
    </location>
</feature>
<feature type="site" description="Cytoplasmic (distal) gate" evidence="15">
    <location>
        <position position="208"/>
    </location>
</feature>
<feature type="site" description="Middle gate" evidence="1">
    <location>
        <position position="293"/>
    </location>
</feature>
<feature type="site" description="Cytoplasmic (distal) gate" evidence="15">
    <location>
        <position position="365"/>
    </location>
</feature>
<feature type="mutagenesis site" description="Greatly decreased Arg uptake into liposomes." evidence="6">
    <original>Y</original>
    <variation>L</variation>
    <location>
        <position position="93"/>
    </location>
</feature>
<feature type="mutagenesis site" description="Vmax for Arg-Agm exchange 1% of wild-type, KM increases 3-fold." evidence="7">
    <original>N</original>
    <variation>A</variation>
    <location>
        <position position="101"/>
    </location>
</feature>
<feature type="mutagenesis site" description="Nearly wild-type Arg-Agm exchange." evidence="7">
    <original>N</original>
    <variation>D</variation>
    <location>
        <position position="101"/>
    </location>
</feature>
<feature type="mutagenesis site" description="30% decreased affinity for Arg, 50% decreased affinity for Agm." evidence="8">
    <original>M</original>
    <variation>A</variation>
    <location>
        <position position="104"/>
    </location>
</feature>
<feature type="mutagenesis site" description="Halves Arg uptake into liposomes." evidence="6">
    <original>W</original>
    <variation>L</variation>
    <location>
        <position position="202"/>
    </location>
</feature>
<feature type="mutagenesis site" description="About wild-type affinity for Arg and Agm." evidence="8">
    <original>I</original>
    <variation>A</variation>
    <location>
        <position position="205"/>
    </location>
</feature>
<feature type="mutagenesis site" description="Loss of Arg-Agm exchange." evidence="6 7">
    <original>W</original>
    <variation>C</variation>
    <variation>H</variation>
    <variation>L</variation>
    <location>
        <position position="293"/>
    </location>
</feature>
<feature type="mutagenesis site" description="Less than 20% Arg-Agm exchange activity. Vmax 15% of wild-type rate." evidence="7">
    <original>W</original>
    <variation>F</variation>
    <variation>Y</variation>
    <location>
        <position position="293"/>
    </location>
</feature>
<feature type="mutagenesis site" description="20% decreased affinity for Arg, 40% decrease affinity for Agm." evidence="8">
    <original>S</original>
    <variation>A</variation>
    <location>
        <position position="357"/>
    </location>
</feature>
<feature type="helix" evidence="19">
    <location>
        <begin position="6"/>
        <end position="8"/>
    </location>
</feature>
<feature type="helix" evidence="19">
    <location>
        <begin position="12"/>
        <end position="24"/>
    </location>
</feature>
<feature type="helix" evidence="19">
    <location>
        <begin position="27"/>
        <end position="29"/>
    </location>
</feature>
<feature type="helix" evidence="19">
    <location>
        <begin position="31"/>
        <end position="36"/>
    </location>
</feature>
<feature type="helix" evidence="19">
    <location>
        <begin position="42"/>
        <end position="66"/>
    </location>
</feature>
<feature type="turn" evidence="19">
    <location>
        <begin position="70"/>
        <end position="72"/>
    </location>
</feature>
<feature type="helix" evidence="19">
    <location>
        <begin position="73"/>
        <end position="81"/>
    </location>
</feature>
<feature type="helix" evidence="19">
    <location>
        <begin position="83"/>
        <end position="112"/>
    </location>
</feature>
<feature type="turn" evidence="19">
    <location>
        <begin position="113"/>
        <end position="115"/>
    </location>
</feature>
<feature type="helix" evidence="19">
    <location>
        <begin position="117"/>
        <end position="120"/>
    </location>
</feature>
<feature type="helix" evidence="19">
    <location>
        <begin position="122"/>
        <end position="142"/>
    </location>
</feature>
<feature type="helix" evidence="19">
    <location>
        <begin position="144"/>
        <end position="168"/>
    </location>
</feature>
<feature type="helix" evidence="19">
    <location>
        <begin position="169"/>
        <end position="171"/>
    </location>
</feature>
<feature type="helix" evidence="19">
    <location>
        <begin position="175"/>
        <end position="180"/>
    </location>
</feature>
<feature type="strand" evidence="19">
    <location>
        <begin position="185"/>
        <end position="187"/>
    </location>
</feature>
<feature type="helix" evidence="19">
    <location>
        <begin position="189"/>
        <end position="200"/>
    </location>
</feature>
<feature type="helix" evidence="19">
    <location>
        <begin position="201"/>
        <end position="204"/>
    </location>
</feature>
<feature type="turn" evidence="19">
    <location>
        <begin position="205"/>
        <end position="208"/>
    </location>
</feature>
<feature type="helix" evidence="19">
    <location>
        <begin position="209"/>
        <end position="212"/>
    </location>
</feature>
<feature type="helix" evidence="19">
    <location>
        <begin position="214"/>
        <end position="216"/>
    </location>
</feature>
<feature type="strand" evidence="19">
    <location>
        <begin position="217"/>
        <end position="219"/>
    </location>
</feature>
<feature type="helix" evidence="19">
    <location>
        <begin position="220"/>
        <end position="249"/>
    </location>
</feature>
<feature type="helix" evidence="19">
    <location>
        <begin position="252"/>
        <end position="257"/>
    </location>
</feature>
<feature type="helix" evidence="19">
    <location>
        <begin position="261"/>
        <end position="267"/>
    </location>
</feature>
<feature type="helix" evidence="19">
    <location>
        <begin position="272"/>
        <end position="306"/>
    </location>
</feature>
<feature type="helix" evidence="19">
    <location>
        <begin position="312"/>
        <end position="315"/>
    </location>
</feature>
<feature type="helix" evidence="19">
    <location>
        <begin position="324"/>
        <end position="337"/>
    </location>
</feature>
<feature type="helix" evidence="19">
    <location>
        <begin position="338"/>
        <end position="342"/>
    </location>
</feature>
<feature type="helix" evidence="19">
    <location>
        <begin position="344"/>
        <end position="360"/>
    </location>
</feature>
<feature type="helix" evidence="19">
    <location>
        <begin position="362"/>
        <end position="376"/>
    </location>
</feature>
<feature type="helix" evidence="19">
    <location>
        <begin position="377"/>
        <end position="379"/>
    </location>
</feature>
<feature type="helix" evidence="19">
    <location>
        <begin position="381"/>
        <end position="383"/>
    </location>
</feature>
<feature type="helix" evidence="19">
    <location>
        <begin position="384"/>
        <end position="403"/>
    </location>
</feature>
<feature type="helix" evidence="19">
    <location>
        <begin position="407"/>
        <end position="428"/>
    </location>
</feature>
<feature type="turn" evidence="19">
    <location>
        <begin position="429"/>
        <end position="431"/>
    </location>
</feature>
<reference key="1">
    <citation type="journal article" date="1995" name="Nucleic Acids Res.">
        <title>Analysis of the Escherichia coli genome VI: DNA sequence of the region from 92.8 through 100 minutes.</title>
        <authorList>
            <person name="Burland V.D."/>
            <person name="Plunkett G. III"/>
            <person name="Sofia H.J."/>
            <person name="Daniels D.L."/>
            <person name="Blattner F.R."/>
        </authorList>
    </citation>
    <scope>NUCLEOTIDE SEQUENCE [LARGE SCALE GENOMIC DNA]</scope>
    <source>
        <strain>K12 / MG1655 / ATCC 47076</strain>
    </source>
</reference>
<reference key="2">
    <citation type="journal article" date="1997" name="Science">
        <title>The complete genome sequence of Escherichia coli K-12.</title>
        <authorList>
            <person name="Blattner F.R."/>
            <person name="Plunkett G. III"/>
            <person name="Bloch C.A."/>
            <person name="Perna N.T."/>
            <person name="Burland V."/>
            <person name="Riley M."/>
            <person name="Collado-Vides J."/>
            <person name="Glasner J.D."/>
            <person name="Rode C.K."/>
            <person name="Mayhew G.F."/>
            <person name="Gregor J."/>
            <person name="Davis N.W."/>
            <person name="Kirkpatrick H.A."/>
            <person name="Goeden M.A."/>
            <person name="Rose D.J."/>
            <person name="Mau B."/>
            <person name="Shao Y."/>
        </authorList>
    </citation>
    <scope>NUCLEOTIDE SEQUENCE [LARGE SCALE GENOMIC DNA]</scope>
    <scope>SEQUENCE REVISION</scope>
    <source>
        <strain>K12 / MG1655 / ATCC 47076</strain>
    </source>
</reference>
<reference key="3">
    <citation type="journal article" date="2006" name="Mol. Syst. Biol.">
        <title>Highly accurate genome sequences of Escherichia coli K-12 strains MG1655 and W3110.</title>
        <authorList>
            <person name="Hayashi K."/>
            <person name="Morooka N."/>
            <person name="Yamamoto Y."/>
            <person name="Fujita K."/>
            <person name="Isono K."/>
            <person name="Choi S."/>
            <person name="Ohtsubo E."/>
            <person name="Baba T."/>
            <person name="Wanner B.L."/>
            <person name="Mori H."/>
            <person name="Horiuchi T."/>
        </authorList>
    </citation>
    <scope>NUCLEOTIDE SEQUENCE [LARGE SCALE GENOMIC DNA]</scope>
    <source>
        <strain>K12 / W3110 / ATCC 27325 / DSM 5911</strain>
    </source>
</reference>
<reference key="4">
    <citation type="journal article" date="2003" name="J. Bacteriol.">
        <title>YjdE (AdiC) is the arginine:agmatine antiporter essential for arginine-dependent acid resistance in Escherichia coli.</title>
        <authorList>
            <person name="Gong S."/>
            <person name="Richard H."/>
            <person name="Foster J.W."/>
        </authorList>
    </citation>
    <scope>FUNCTION</scope>
    <scope>BIOPHYSICOCHEMICAL PROPERTIES</scope>
    <scope>SUBCELLULAR LOCATION</scope>
    <scope>INDUCTION</scope>
    <scope>OPERON</scope>
    <scope>DISRUPTION PHENOTYPE</scope>
    <source>
        <strain>K12</strain>
    </source>
</reference>
<reference key="5">
    <citation type="journal article" date="2003" name="J. Bacteriol.">
        <title>Arginine-agmatine antiporter in extreme acid resistance in Escherichia coli.</title>
        <authorList>
            <person name="Iyer R."/>
            <person name="Williams C."/>
            <person name="Miller C."/>
        </authorList>
    </citation>
    <scope>FUNCTION</scope>
    <scope>BIOPHYSICOCHEMICAL PROPERTIES</scope>
    <scope>DISRUPTION PHENOTYPE</scope>
    <source>
        <strain>K12 / MG1655 / ATCC 47076</strain>
    </source>
</reference>
<reference key="6">
    <citation type="journal article" date="2005" name="Science">
        <title>Global topology analysis of the Escherichia coli inner membrane proteome.</title>
        <authorList>
            <person name="Daley D.O."/>
            <person name="Rapp M."/>
            <person name="Granseth E."/>
            <person name="Melen K."/>
            <person name="Drew D."/>
            <person name="von Heijne G."/>
        </authorList>
    </citation>
    <scope>SUBCELLULAR LOCATION</scope>
    <scope>TOPOLOGY [LARGE SCALE ANALYSIS]</scope>
    <source>
        <strain>K12 / MG1655 / ATCC 47076</strain>
    </source>
</reference>
<reference key="7">
    <citation type="journal article" date="2009" name="Nature">
        <title>Structure of a prokaryotic virtual proton pump at 3.2 A resolution.</title>
        <authorList>
            <person name="Fang Y."/>
            <person name="Jayaram H."/>
            <person name="Shane T."/>
            <person name="Kolmakova-Partensky L."/>
            <person name="Wu F."/>
            <person name="Williams C."/>
            <person name="Xiong Y."/>
            <person name="Miller C."/>
        </authorList>
    </citation>
    <scope>FUNCTION</scope>
    <scope>MUTAGENESIS OF TYR-93; TRP-202 AND TRP-293</scope>
</reference>
<reference evidence="16" key="8">
    <citation type="journal article" date="2011" name="Proc. Natl. Acad. Sci. U.S.A.">
        <title>Molecular basis of substrate-induced permeation by an amino acid antiporter.</title>
        <authorList>
            <person name="Kowalczyk L."/>
            <person name="Ratera M."/>
            <person name="Paladino A."/>
            <person name="Bartoccioni P."/>
            <person name="Errasti-Murugarren E."/>
            <person name="Valencia E."/>
            <person name="Portella G."/>
            <person name="Bial S."/>
            <person name="Zorzano A."/>
            <person name="Fita I."/>
            <person name="Orozco M."/>
            <person name="Carpena X."/>
            <person name="Vazquez-Ibar J.L."/>
            <person name="Palacin M."/>
        </authorList>
    </citation>
    <scope>X-RAY CRYSTALLOGRAPHY (3.00 ANGSTROMS) OF ASP-101 MUTANT IN OUTWARD-OPEN CONFORMATION IN COMPLEX WITH SUBSTRATE (ARG)</scope>
    <scope>FUNCTION</scope>
    <scope>BIOPHYSICOCHEMICAL PROPERTIES</scope>
    <scope>SUBUNIT</scope>
    <scope>MUTAGENESIS OF ASN-101 AND TRP-293</scope>
    <source>
        <strain>K12 / DH5-alpha</strain>
    </source>
</reference>
<reference evidence="17 18" key="9">
    <citation type="journal article" date="2016" name="Proc. Natl. Acad. Sci. U.S.A.">
        <title>Insights into the molecular basis for substrate binding and specificity of the wild-type L-arginine/agmatine antiporter AdiC.</title>
        <authorList>
            <person name="Ilgu H."/>
            <person name="Jeckelmann J.M."/>
            <person name="Gapsys V."/>
            <person name="Ucurum Z."/>
            <person name="de Groot B.L."/>
            <person name="Fotiadis D."/>
        </authorList>
    </citation>
    <scope>X-RAY CRYSTALLOGRAPHY (2.21 ANGSTROMS)IN OUTWARD-OPEN CONFORMATION IN THE PRESENCE AND ABSENCE OF AGMATINE</scope>
    <scope>SUBUNIT</scope>
    <scope>MUTAGENESIS OF MET-104; ILE-205 AND SER-357</scope>
    <source>
        <strain>K12 / XL1-Blue</strain>
    </source>
</reference>
<proteinExistence type="evidence at protein level"/>
<gene>
    <name evidence="9 10" type="primary">adiC</name>
    <name type="synonym">aniC</name>
    <name type="synonym">yjdD</name>
    <name type="synonym">yjdE</name>
    <name type="ordered locus">b4115</name>
    <name type="ordered locus">JW4076</name>
</gene>
<name>ADIC_ECOLI</name>
<evidence type="ECO:0000250" key="1">
    <source>
        <dbReference type="UniProtKB" id="P60063"/>
    </source>
</evidence>
<evidence type="ECO:0000255" key="2"/>
<evidence type="ECO:0000269" key="3">
    <source>
    </source>
</evidence>
<evidence type="ECO:0000269" key="4">
    <source>
    </source>
</evidence>
<evidence type="ECO:0000269" key="5">
    <source>
    </source>
</evidence>
<evidence type="ECO:0000269" key="6">
    <source>
    </source>
</evidence>
<evidence type="ECO:0000269" key="7">
    <source>
    </source>
</evidence>
<evidence type="ECO:0000269" key="8">
    <source>
    </source>
</evidence>
<evidence type="ECO:0000303" key="9">
    <source>
    </source>
</evidence>
<evidence type="ECO:0000303" key="10">
    <source>
    </source>
</evidence>
<evidence type="ECO:0000305" key="11"/>
<evidence type="ECO:0000305" key="12">
    <source>
    </source>
</evidence>
<evidence type="ECO:0000305" key="13">
    <source>
    </source>
</evidence>
<evidence type="ECO:0000305" key="14">
    <source>
    </source>
</evidence>
<evidence type="ECO:0000305" key="15">
    <source>
    </source>
</evidence>
<evidence type="ECO:0007744" key="16">
    <source>
        <dbReference type="PDB" id="3OB6"/>
    </source>
</evidence>
<evidence type="ECO:0007744" key="17">
    <source>
        <dbReference type="PDB" id="5J4I"/>
    </source>
</evidence>
<evidence type="ECO:0007744" key="18">
    <source>
        <dbReference type="PDB" id="5J4N"/>
    </source>
</evidence>
<evidence type="ECO:0007829" key="19">
    <source>
        <dbReference type="PDB" id="7O82"/>
    </source>
</evidence>
<comment type="function">
    <text evidence="3 4 6 7 13 14">Major component of the acid-resistance (AR) system allowing enteric pathogens to survive the acidic environment in the stomach (Probable). Exchanges extracellular arginine for its intracellular decarboxylation product agmatine (Agm) thereby expelling intracellular protons (PubMed:12867448, PubMed:14594828, PubMed:19578361, PubMed:21368142). Probably undergoes several conformational states in order to translocate the substrate across the membrane; keeps the substrate accessible to only 1 side of the membrane at a time by opening and closing 3 membrane-internal gates (Probable).</text>
</comment>
<comment type="catalytic activity">
    <reaction evidence="3 4 6 7">
        <text>agmatine(in) + L-arginine(out) = agmatine(out) + L-arginine(in)</text>
        <dbReference type="Rhea" id="RHEA:29651"/>
        <dbReference type="ChEBI" id="CHEBI:32682"/>
        <dbReference type="ChEBI" id="CHEBI:58145"/>
    </reaction>
    <physiologicalReaction direction="left-to-right" evidence="3 4 6 7">
        <dbReference type="Rhea" id="RHEA:29652"/>
    </physiologicalReaction>
</comment>
<comment type="biophysicochemical properties">
    <kinetics>
        <KM evidence="7">36 uM for Arg</KM>
        <Vmax evidence="7">50.0 pmol/min/ug enzyme for Arg-Agm exchange</Vmax>
    </kinetics>
    <phDependence>
        <text evidence="3 4">Optimum pH is 2.5 for Arg-Agm exchange.</text>
    </phDependence>
</comment>
<comment type="subunit">
    <text evidence="7 8">Homodimer; each subunit has its own individual transport capacity.</text>
</comment>
<comment type="subcellular location">
    <subcellularLocation>
        <location evidence="5 12">Cell inner membrane</location>
        <topology evidence="7">Multi-pass membrane protein</topology>
    </subcellularLocation>
</comment>
<comment type="induction">
    <text evidence="3">By acidic conditions, a monocistronic operon (at protein level).</text>
</comment>
<comment type="domain">
    <text evidence="7 8">Each subunit has 12 transmembrane (TM) helices; TM1 and TM6 are interrupted by short non-helical Gly-rich loops in the middle of their transmembrane spans. Each subunit has a central cavity which binds substrate.</text>
</comment>
<comment type="disruption phenotype">
    <text evidence="3 4">Loss of arginine-dependent acid resistance. No coupled transport of arginine and agmatine (PubMed:12867448, PubMed:14594828). No effect on levels of AdiA (PubMed:12867448).</text>
</comment>
<comment type="similarity">
    <text evidence="11">Belongs to the amino acid-polyamine-organocation (APC) superfamily. Basic amino acid/polyamine antiporter (APA) (TC 2.A.3.2) family.</text>
</comment>
<comment type="sequence caution" evidence="11">
    <conflict type="frameshift">
        <sequence resource="EMBL-CDS" id="AAA97014"/>
    </conflict>
</comment>
<comment type="sequence caution" evidence="11">
    <conflict type="frameshift">
        <sequence resource="EMBL-CDS" id="AAA97015"/>
    </conflict>
</comment>
<sequence>MSSDADAHKVGLIPVTLMVSGNIMGSGVFLLPANLASTGGIAIYGWLVTIIGALGLSMVYAKMSFLDPSPGGSYAYARRCFGPFLGYQTNVLYWLACWIGNIAMVVIGVGYLSYFFPILKDPLVLTITCVVVLWIFVLLNIVGPKMITRVQAVATVLALIPIVGIAVFGWFWFRGETYMAAWNVSGLGTFGAIQSTLNVTLWSFIGVESASVAAGVVKNPKRNVPIATIGGVLIAAVCYVLSTTAIMGMIPNAALRVSASPFGDAARMALGDTAGAIVSFCAAAGCLGSLGGWTLLAGQTAKAAADDGLFPPIFARVNKAGTPVAGLIIVGILMTIFQLSSISPNATKEFGLVSSVSVIFTLVPYLYTCAALLLLGHGHFGKARPAYLAVTTIAFLYCIWAVVGSGAKEVMWSFVTLMVITAMYALNYNRLHKNPYPLDAPISKD</sequence>
<protein>
    <recommendedName>
        <fullName evidence="9">Arginine/agmatine antiporter</fullName>
    </recommendedName>
</protein>